<organism>
    <name type="scientific">Abrothrix longipilis</name>
    <name type="common">Long-haired grass mouse</name>
    <name type="synonym">Akodon longipilis</name>
    <dbReference type="NCBI Taxonomy" id="29094"/>
    <lineage>
        <taxon>Eukaryota</taxon>
        <taxon>Metazoa</taxon>
        <taxon>Chordata</taxon>
        <taxon>Craniata</taxon>
        <taxon>Vertebrata</taxon>
        <taxon>Euteleostomi</taxon>
        <taxon>Mammalia</taxon>
        <taxon>Eutheria</taxon>
        <taxon>Euarchontoglires</taxon>
        <taxon>Glires</taxon>
        <taxon>Rodentia</taxon>
        <taxon>Myomorpha</taxon>
        <taxon>Muroidea</taxon>
        <taxon>Cricetidae</taxon>
        <taxon>Sigmodontinae</taxon>
        <taxon>Abrothrix</taxon>
    </lineage>
</organism>
<proteinExistence type="inferred from homology"/>
<geneLocation type="mitochondrion"/>
<protein>
    <recommendedName>
        <fullName>Cytochrome b</fullName>
    </recommendedName>
    <alternativeName>
        <fullName>Complex III subunit 3</fullName>
    </alternativeName>
    <alternativeName>
        <fullName>Complex III subunit III</fullName>
    </alternativeName>
    <alternativeName>
        <fullName>Cytochrome b-c1 complex subunit 3</fullName>
    </alternativeName>
    <alternativeName>
        <fullName>Ubiquinol-cytochrome-c reductase complex cytochrome b subunit</fullName>
    </alternativeName>
</protein>
<comment type="function">
    <text evidence="2">Component of the ubiquinol-cytochrome c reductase complex (complex III or cytochrome b-c1 complex) that is part of the mitochondrial respiratory chain. The b-c1 complex mediates electron transfer from ubiquinol to cytochrome c. Contributes to the generation of a proton gradient across the mitochondrial membrane that is then used for ATP synthesis.</text>
</comment>
<comment type="cofactor">
    <cofactor evidence="2">
        <name>heme b</name>
        <dbReference type="ChEBI" id="CHEBI:60344"/>
    </cofactor>
    <text evidence="2">Binds 2 heme b groups non-covalently.</text>
</comment>
<comment type="subunit">
    <text evidence="2">The cytochrome bc1 complex contains 11 subunits: 3 respiratory subunits (MT-CYB, CYC1 and UQCRFS1), 2 core proteins (UQCRC1 and UQCRC2) and 6 low-molecular weight proteins (UQCRH/QCR6, UQCRB/QCR7, UQCRQ/QCR8, UQCR10/QCR9, UQCR11/QCR10 and a cleavage product of UQCRFS1). This cytochrome bc1 complex then forms a dimer.</text>
</comment>
<comment type="subcellular location">
    <subcellularLocation>
        <location evidence="2">Mitochondrion inner membrane</location>
        <topology evidence="2">Multi-pass membrane protein</topology>
    </subcellularLocation>
</comment>
<comment type="miscellaneous">
    <text evidence="1">Heme 1 (or BL or b562) is low-potential and absorbs at about 562 nm, and heme 2 (or BH or b566) is high-potential and absorbs at about 566 nm.</text>
</comment>
<comment type="similarity">
    <text evidence="3 4">Belongs to the cytochrome b family.</text>
</comment>
<comment type="caution">
    <text evidence="2">The full-length protein contains only eight transmembrane helices, not nine as predicted by bioinformatics tools.</text>
</comment>
<keyword id="KW-0249">Electron transport</keyword>
<keyword id="KW-0349">Heme</keyword>
<keyword id="KW-0408">Iron</keyword>
<keyword id="KW-0472">Membrane</keyword>
<keyword id="KW-0479">Metal-binding</keyword>
<keyword id="KW-0496">Mitochondrion</keyword>
<keyword id="KW-0999">Mitochondrion inner membrane</keyword>
<keyword id="KW-0679">Respiratory chain</keyword>
<keyword id="KW-0812">Transmembrane</keyword>
<keyword id="KW-1133">Transmembrane helix</keyword>
<keyword id="KW-0813">Transport</keyword>
<keyword id="KW-0830">Ubiquinone</keyword>
<evidence type="ECO:0000250" key="1"/>
<evidence type="ECO:0000250" key="2">
    <source>
        <dbReference type="UniProtKB" id="P00157"/>
    </source>
</evidence>
<evidence type="ECO:0000255" key="3">
    <source>
        <dbReference type="PROSITE-ProRule" id="PRU00967"/>
    </source>
</evidence>
<evidence type="ECO:0000255" key="4">
    <source>
        <dbReference type="PROSITE-ProRule" id="PRU00968"/>
    </source>
</evidence>
<feature type="chain" id="PRO_0000257868" description="Cytochrome b">
    <location>
        <begin position="1"/>
        <end position="381"/>
    </location>
</feature>
<feature type="transmembrane region" description="Helical" evidence="2">
    <location>
        <begin position="33"/>
        <end position="53"/>
    </location>
</feature>
<feature type="transmembrane region" description="Helical" evidence="2">
    <location>
        <begin position="77"/>
        <end position="98"/>
    </location>
</feature>
<feature type="transmembrane region" description="Helical" evidence="2">
    <location>
        <begin position="113"/>
        <end position="133"/>
    </location>
</feature>
<feature type="transmembrane region" description="Helical" evidence="2">
    <location>
        <begin position="178"/>
        <end position="198"/>
    </location>
</feature>
<feature type="transmembrane region" description="Helical" evidence="2">
    <location>
        <begin position="226"/>
        <end position="246"/>
    </location>
</feature>
<feature type="transmembrane region" description="Helical" evidence="2">
    <location>
        <begin position="288"/>
        <end position="308"/>
    </location>
</feature>
<feature type="transmembrane region" description="Helical" evidence="2">
    <location>
        <begin position="320"/>
        <end position="340"/>
    </location>
</feature>
<feature type="transmembrane region" description="Helical" evidence="2">
    <location>
        <begin position="347"/>
        <end position="367"/>
    </location>
</feature>
<feature type="binding site" description="axial binding residue" evidence="2">
    <location>
        <position position="83"/>
    </location>
    <ligand>
        <name>heme b</name>
        <dbReference type="ChEBI" id="CHEBI:60344"/>
        <label>b562</label>
    </ligand>
    <ligandPart>
        <name>Fe</name>
        <dbReference type="ChEBI" id="CHEBI:18248"/>
    </ligandPart>
</feature>
<feature type="binding site" description="axial binding residue" evidence="2">
    <location>
        <position position="97"/>
    </location>
    <ligand>
        <name>heme b</name>
        <dbReference type="ChEBI" id="CHEBI:60344"/>
        <label>b566</label>
    </ligand>
    <ligandPart>
        <name>Fe</name>
        <dbReference type="ChEBI" id="CHEBI:18248"/>
    </ligandPart>
</feature>
<feature type="binding site" description="axial binding residue" evidence="2">
    <location>
        <position position="182"/>
    </location>
    <ligand>
        <name>heme b</name>
        <dbReference type="ChEBI" id="CHEBI:60344"/>
        <label>b562</label>
    </ligand>
    <ligandPart>
        <name>Fe</name>
        <dbReference type="ChEBI" id="CHEBI:18248"/>
    </ligandPart>
</feature>
<feature type="binding site" description="axial binding residue" evidence="2">
    <location>
        <position position="196"/>
    </location>
    <ligand>
        <name>heme b</name>
        <dbReference type="ChEBI" id="CHEBI:60344"/>
        <label>b566</label>
    </ligand>
    <ligandPart>
        <name>Fe</name>
        <dbReference type="ChEBI" id="CHEBI:18248"/>
    </ligandPart>
</feature>
<feature type="binding site" evidence="2">
    <location>
        <position position="201"/>
    </location>
    <ligand>
        <name>a ubiquinone</name>
        <dbReference type="ChEBI" id="CHEBI:16389"/>
    </ligand>
</feature>
<name>CYB_ABRLO</name>
<gene>
    <name type="primary">MT-CYB</name>
    <name type="synonym">COB</name>
    <name type="synonym">CYTB</name>
    <name type="synonym">MTCYB</name>
</gene>
<reference key="1">
    <citation type="journal article" date="1999" name="J. Mammal. Evol.">
        <title>Phylogenetic relationships and the radiation of Sigmodontine rodents in South America: evidence from cytochrome b.</title>
        <authorList>
            <person name="Smith M.F."/>
            <person name="Patton J.L."/>
        </authorList>
    </citation>
    <scope>NUCLEOTIDE SEQUENCE [GENOMIC DNA]</scope>
    <source>
        <tissue>Liver</tissue>
    </source>
</reference>
<accession>Q33754</accession>
<dbReference type="EMBL" id="U03530">
    <property type="protein sequence ID" value="AAD12578.2"/>
    <property type="molecule type" value="Genomic_DNA"/>
</dbReference>
<dbReference type="GO" id="GO:0005743">
    <property type="term" value="C:mitochondrial inner membrane"/>
    <property type="evidence" value="ECO:0007669"/>
    <property type="project" value="UniProtKB-SubCell"/>
</dbReference>
<dbReference type="GO" id="GO:0045275">
    <property type="term" value="C:respiratory chain complex III"/>
    <property type="evidence" value="ECO:0007669"/>
    <property type="project" value="InterPro"/>
</dbReference>
<dbReference type="GO" id="GO:0046872">
    <property type="term" value="F:metal ion binding"/>
    <property type="evidence" value="ECO:0007669"/>
    <property type="project" value="UniProtKB-KW"/>
</dbReference>
<dbReference type="GO" id="GO:0008121">
    <property type="term" value="F:ubiquinol-cytochrome-c reductase activity"/>
    <property type="evidence" value="ECO:0007669"/>
    <property type="project" value="InterPro"/>
</dbReference>
<dbReference type="GO" id="GO:0006122">
    <property type="term" value="P:mitochondrial electron transport, ubiquinol to cytochrome c"/>
    <property type="evidence" value="ECO:0007669"/>
    <property type="project" value="TreeGrafter"/>
</dbReference>
<dbReference type="CDD" id="cd00290">
    <property type="entry name" value="cytochrome_b_C"/>
    <property type="match status" value="1"/>
</dbReference>
<dbReference type="CDD" id="cd00284">
    <property type="entry name" value="Cytochrome_b_N"/>
    <property type="match status" value="1"/>
</dbReference>
<dbReference type="FunFam" id="1.20.810.10:FF:000002">
    <property type="entry name" value="Cytochrome b"/>
    <property type="match status" value="1"/>
</dbReference>
<dbReference type="Gene3D" id="1.20.810.10">
    <property type="entry name" value="Cytochrome Bc1 Complex, Chain C"/>
    <property type="match status" value="1"/>
</dbReference>
<dbReference type="InterPro" id="IPR005798">
    <property type="entry name" value="Cyt_b/b6_C"/>
</dbReference>
<dbReference type="InterPro" id="IPR036150">
    <property type="entry name" value="Cyt_b/b6_C_sf"/>
</dbReference>
<dbReference type="InterPro" id="IPR005797">
    <property type="entry name" value="Cyt_b/b6_N"/>
</dbReference>
<dbReference type="InterPro" id="IPR027387">
    <property type="entry name" value="Cytb/b6-like_sf"/>
</dbReference>
<dbReference type="InterPro" id="IPR030689">
    <property type="entry name" value="Cytochrome_b"/>
</dbReference>
<dbReference type="InterPro" id="IPR048260">
    <property type="entry name" value="Cytochrome_b_C_euk/bac"/>
</dbReference>
<dbReference type="InterPro" id="IPR048259">
    <property type="entry name" value="Cytochrome_b_N_euk/bac"/>
</dbReference>
<dbReference type="InterPro" id="IPR016174">
    <property type="entry name" value="Di-haem_cyt_TM"/>
</dbReference>
<dbReference type="PANTHER" id="PTHR19271">
    <property type="entry name" value="CYTOCHROME B"/>
    <property type="match status" value="1"/>
</dbReference>
<dbReference type="PANTHER" id="PTHR19271:SF16">
    <property type="entry name" value="CYTOCHROME B"/>
    <property type="match status" value="1"/>
</dbReference>
<dbReference type="Pfam" id="PF00032">
    <property type="entry name" value="Cytochrom_B_C"/>
    <property type="match status" value="1"/>
</dbReference>
<dbReference type="Pfam" id="PF00033">
    <property type="entry name" value="Cytochrome_B"/>
    <property type="match status" value="1"/>
</dbReference>
<dbReference type="PIRSF" id="PIRSF038885">
    <property type="entry name" value="COB"/>
    <property type="match status" value="1"/>
</dbReference>
<dbReference type="SUPFAM" id="SSF81648">
    <property type="entry name" value="a domain/subunit of cytochrome bc1 complex (Ubiquinol-cytochrome c reductase)"/>
    <property type="match status" value="1"/>
</dbReference>
<dbReference type="SUPFAM" id="SSF81342">
    <property type="entry name" value="Transmembrane di-heme cytochromes"/>
    <property type="match status" value="1"/>
</dbReference>
<dbReference type="PROSITE" id="PS51003">
    <property type="entry name" value="CYTB_CTER"/>
    <property type="match status" value="1"/>
</dbReference>
<dbReference type="PROSITE" id="PS51002">
    <property type="entry name" value="CYTB_NTER"/>
    <property type="match status" value="1"/>
</dbReference>
<sequence length="381" mass="42930">MTIMRKTHPLLKIINHSFIDLPTPSNISSWWNFGSLLGICLIIQILTGLFLAMHYTSDTATAFSSVTHICRDVNYGWLIRYMHANGASMFFICLFIHVGRGIYYGSYMLSETWNIGIILLLTTMATAFVGYVLPWGQMSFWGATVITNLLSAIPYIGTTLVEWIWGGFSVDKATLTRFFAFHFILPFIITAFVLVHLLFLHETGSNNPSGLNSNSDKIPFHPYYTIKDLLGVILLLMVLMILVLFFPDVLGDPDNYTPANPLNTPAHIKPEWYXLFAYAILRSIPNKLGGVLALILSILILAAFPLLNSSKQHGLIYRPISQTLYWIFVSNLLILTWIGGQPVEYPFTVIGQIASILYFAIIIILMPXANMIENNILKLXY</sequence>